<evidence type="ECO:0000250" key="1"/>
<evidence type="ECO:0000250" key="2">
    <source>
        <dbReference type="UniProtKB" id="Q5HYI7"/>
    </source>
</evidence>
<evidence type="ECO:0000256" key="3">
    <source>
        <dbReference type="SAM" id="MobiDB-lite"/>
    </source>
</evidence>
<evidence type="ECO:0000305" key="4"/>
<comment type="function">
    <text evidence="1">Could function in transport of proteins into the mitochondrion.</text>
</comment>
<comment type="subunit">
    <text evidence="2">Part of a large protein complex spanning both mitochondrial membranes termed the mitochondrial intermembrane space bridging (MIB) complex.</text>
</comment>
<comment type="subcellular location">
    <subcellularLocation>
        <location evidence="2">Mitochondrion</location>
    </subcellularLocation>
    <subcellularLocation>
        <location evidence="4">Mitochondrion outer membrane</location>
    </subcellularLocation>
</comment>
<comment type="similarity">
    <text evidence="4">Belongs to the metaxin family.</text>
</comment>
<comment type="sequence caution" evidence="4">
    <conflict type="erroneous initiation">
        <sequence resource="EMBL-CDS" id="AAI06560"/>
    </conflict>
</comment>
<proteinExistence type="evidence at transcript level"/>
<sequence>MMELRCWGSDWGLPSVHPECLVVLAYARFAGAPLKVTPVDYTWASPKGTVPFLTSAGEDTHQPANILNFFRKQKYNADYVLSAKEGSDTLAYIALLEEKLLPAVLHTFWVDTENYCNVTRPWYASHTPFPLNYYLPGKMSRDALDRILVTRGQPPLYSLSEVEAQIYKDAKECLNLFSNRLGTAQYFFGSTPTSLDAFVFGFLAPLYKAHLHKVNLQQHLKQLSNLCHFCDHILSAYFVSDDAGTSAAGQEAIDANLQKLTQLVNKESNLIEKMDDNLRRSPQNRPQKLSTLKPVGGAENSHSSDLLSH</sequence>
<name>MTX3_XENLA</name>
<organism>
    <name type="scientific">Xenopus laevis</name>
    <name type="common">African clawed frog</name>
    <dbReference type="NCBI Taxonomy" id="8355"/>
    <lineage>
        <taxon>Eukaryota</taxon>
        <taxon>Metazoa</taxon>
        <taxon>Chordata</taxon>
        <taxon>Craniata</taxon>
        <taxon>Vertebrata</taxon>
        <taxon>Euteleostomi</taxon>
        <taxon>Amphibia</taxon>
        <taxon>Batrachia</taxon>
        <taxon>Anura</taxon>
        <taxon>Pipoidea</taxon>
        <taxon>Pipidae</taxon>
        <taxon>Xenopodinae</taxon>
        <taxon>Xenopus</taxon>
        <taxon>Xenopus</taxon>
    </lineage>
</organism>
<accession>Q3KPT9</accession>
<accession>Q6QIT1</accession>
<feature type="chain" id="PRO_0000337102" description="Metaxin-3">
    <location>
        <begin position="1"/>
        <end position="309"/>
    </location>
</feature>
<feature type="region of interest" description="Disordered" evidence="3">
    <location>
        <begin position="274"/>
        <end position="309"/>
    </location>
</feature>
<feature type="compositionally biased region" description="Polar residues" evidence="3">
    <location>
        <begin position="280"/>
        <end position="290"/>
    </location>
</feature>
<feature type="compositionally biased region" description="Polar residues" evidence="3">
    <location>
        <begin position="300"/>
        <end position="309"/>
    </location>
</feature>
<feature type="sequence conflict" description="In Ref. 1; AAT02187." evidence="4" ref="1">
    <original>I</original>
    <variation>N</variation>
    <location>
        <position position="147"/>
    </location>
</feature>
<reference key="1">
    <citation type="journal article" date="2005" name="DNA Seq.">
        <title>Characterization of the cDNA and amino acid sequences of Xenopus metaxin 3, and relationship to Xenopus metaxins 1 and 2.</title>
        <authorList>
            <person name="Adolph K.W."/>
        </authorList>
    </citation>
    <scope>NUCLEOTIDE SEQUENCE [MRNA]</scope>
    <source>
        <tissue>Embryo</tissue>
    </source>
</reference>
<reference key="2">
    <citation type="submission" date="2005-10" db="EMBL/GenBank/DDBJ databases">
        <authorList>
            <consortium name="NIH - Xenopus Gene Collection (XGC) project"/>
        </authorList>
    </citation>
    <scope>NUCLEOTIDE SEQUENCE [LARGE SCALE MRNA]</scope>
    <source>
        <tissue>Testis</tissue>
    </source>
</reference>
<gene>
    <name type="primary">mtx3</name>
</gene>
<protein>
    <recommendedName>
        <fullName>Metaxin-3</fullName>
        <shortName>xMTX3</shortName>
    </recommendedName>
</protein>
<keyword id="KW-0472">Membrane</keyword>
<keyword id="KW-0496">Mitochondrion</keyword>
<keyword id="KW-1000">Mitochondrion outer membrane</keyword>
<keyword id="KW-0653">Protein transport</keyword>
<keyword id="KW-1185">Reference proteome</keyword>
<keyword id="KW-0813">Transport</keyword>
<dbReference type="EMBL" id="AY538738">
    <property type="protein sequence ID" value="AAT02187.1"/>
    <property type="molecule type" value="mRNA"/>
</dbReference>
<dbReference type="EMBL" id="BC106559">
    <property type="protein sequence ID" value="AAI06560.1"/>
    <property type="status" value="ALT_INIT"/>
    <property type="molecule type" value="mRNA"/>
</dbReference>
<dbReference type="RefSeq" id="NP_001084474.1">
    <property type="nucleotide sequence ID" value="NM_001091005.1"/>
</dbReference>
<dbReference type="SMR" id="Q3KPT9"/>
<dbReference type="DNASU" id="407751"/>
<dbReference type="GeneID" id="407751"/>
<dbReference type="KEGG" id="xla:407751"/>
<dbReference type="AGR" id="Xenbase:XB-GENE-994130"/>
<dbReference type="CTD" id="407751"/>
<dbReference type="Xenbase" id="XB-GENE-994130">
    <property type="gene designation" value="mtx3.L"/>
</dbReference>
<dbReference type="OrthoDB" id="5835136at2759"/>
<dbReference type="Proteomes" id="UP000186698">
    <property type="component" value="Chromosome 1L"/>
</dbReference>
<dbReference type="Bgee" id="407751">
    <property type="expression patterns" value="Expressed in testis and 19 other cell types or tissues"/>
</dbReference>
<dbReference type="GO" id="GO:0005737">
    <property type="term" value="C:cytoplasm"/>
    <property type="evidence" value="ECO:0000318"/>
    <property type="project" value="GO_Central"/>
</dbReference>
<dbReference type="GO" id="GO:0001401">
    <property type="term" value="C:SAM complex"/>
    <property type="evidence" value="ECO:0000318"/>
    <property type="project" value="GO_Central"/>
</dbReference>
<dbReference type="GO" id="GO:0007005">
    <property type="term" value="P:mitochondrion organization"/>
    <property type="evidence" value="ECO:0000318"/>
    <property type="project" value="GO_Central"/>
</dbReference>
<dbReference type="GO" id="GO:0015031">
    <property type="term" value="P:protein transport"/>
    <property type="evidence" value="ECO:0007669"/>
    <property type="project" value="UniProtKB-KW"/>
</dbReference>
<dbReference type="CDD" id="cd03212">
    <property type="entry name" value="GST_C_Metaxin1_3"/>
    <property type="match status" value="1"/>
</dbReference>
<dbReference type="CDD" id="cd03078">
    <property type="entry name" value="GST_N_Metaxin1_like"/>
    <property type="match status" value="1"/>
</dbReference>
<dbReference type="InterPro" id="IPR036282">
    <property type="entry name" value="Glutathione-S-Trfase_C_sf"/>
</dbReference>
<dbReference type="InterPro" id="IPR040079">
    <property type="entry name" value="Glutathione_S-Trfase"/>
</dbReference>
<dbReference type="InterPro" id="IPR017410">
    <property type="entry name" value="Metaxin1/3"/>
</dbReference>
<dbReference type="InterPro" id="IPR033468">
    <property type="entry name" value="Metaxin_GST"/>
</dbReference>
<dbReference type="InterPro" id="IPR050931">
    <property type="entry name" value="Mito_Protein_Transport_Metaxin"/>
</dbReference>
<dbReference type="InterPro" id="IPR019564">
    <property type="entry name" value="Sam37/metaxin_N"/>
</dbReference>
<dbReference type="PANTHER" id="PTHR12289">
    <property type="entry name" value="METAXIN RELATED"/>
    <property type="match status" value="1"/>
</dbReference>
<dbReference type="PANTHER" id="PTHR12289:SF30">
    <property type="entry name" value="METAXIN-3"/>
    <property type="match status" value="1"/>
</dbReference>
<dbReference type="Pfam" id="PF17171">
    <property type="entry name" value="GST_C_6"/>
    <property type="match status" value="1"/>
</dbReference>
<dbReference type="Pfam" id="PF10568">
    <property type="entry name" value="Tom37"/>
    <property type="match status" value="1"/>
</dbReference>
<dbReference type="PIRSF" id="PIRSF038150">
    <property type="entry name" value="Metaxin"/>
    <property type="match status" value="1"/>
</dbReference>
<dbReference type="SFLD" id="SFLDS00019">
    <property type="entry name" value="Glutathione_Transferase_(cytos"/>
    <property type="match status" value="1"/>
</dbReference>
<dbReference type="SFLD" id="SFLDG01180">
    <property type="entry name" value="SUF1"/>
    <property type="match status" value="1"/>
</dbReference>
<dbReference type="SUPFAM" id="SSF47616">
    <property type="entry name" value="GST C-terminal domain-like"/>
    <property type="match status" value="1"/>
</dbReference>